<comment type="function">
    <text evidence="1">ATP-dependent agmatine transferase that catalyzes the formation of 2-agmatinylcytidine (agm2C) at the wobble position (C34) of tRNA(Ile2), converting the codon specificity from AUG to AUA.</text>
</comment>
<comment type="catalytic activity">
    <reaction evidence="1">
        <text>cytidine(34) in tRNA(Ile2) + agmatine + ATP + H2O = 2-agmatinylcytidine(34) in tRNA(Ile2) + AMP + 2 phosphate + 2 H(+)</text>
        <dbReference type="Rhea" id="RHEA:43608"/>
        <dbReference type="Rhea" id="RHEA-COMP:10625"/>
        <dbReference type="Rhea" id="RHEA-COMP:10626"/>
        <dbReference type="ChEBI" id="CHEBI:15377"/>
        <dbReference type="ChEBI" id="CHEBI:15378"/>
        <dbReference type="ChEBI" id="CHEBI:30616"/>
        <dbReference type="ChEBI" id="CHEBI:43474"/>
        <dbReference type="ChEBI" id="CHEBI:58145"/>
        <dbReference type="ChEBI" id="CHEBI:82748"/>
        <dbReference type="ChEBI" id="CHEBI:83545"/>
        <dbReference type="ChEBI" id="CHEBI:456215"/>
        <dbReference type="EC" id="6.3.4.22"/>
    </reaction>
</comment>
<comment type="subcellular location">
    <subcellularLocation>
        <location evidence="1">Cytoplasm</location>
    </subcellularLocation>
</comment>
<comment type="similarity">
    <text evidence="1">Belongs to the TiaS family.</text>
</comment>
<comment type="sequence caution" evidence="2">
    <conflict type="erroneous initiation">
        <sequence resource="EMBL-CDS" id="ABK78627"/>
    </conflict>
    <text>Extended N-terminus.</text>
</comment>
<sequence length="446" mass="48442">MGPLLQLAGTRLHIGIDDTDSIKGMCTTYLGFRLARLLQKEGAEFEDYPRLVRLNPNVPWKTRGNGAVGMTVNVSDPEAARKIAIDAVSLYSDLENGANPAAVFCEGGIPQPVRDLSREALHVMVEQERARGIIERHCSGLFYTGSGQGMVGAAAAIGYEFGDSTLELLSYRREENRGTPRPIWPEDVRGIQGAYPDTFNSYDEARGTSIIAPRGPDPVFYGIRGELASSLLGASEMVRTPERLEGYMIYRSNQGTADHLEYVIDAADPRPYSSGTISGVISTEPVVREGGHVFFEINAGGSMVPCAVYKESGMTDAAALLRGGDKVVVGGGIRRESGSHPKVLNVEFARVERLARIYRMANPYCTKCSKSMKSKGIGQGFKCTRCGAASIHRVEREIPRGISVGLYLPVASSQRHLARPYGRQGRTSRIQFDGASPWLGVFDSGE</sequence>
<keyword id="KW-0067">ATP-binding</keyword>
<keyword id="KW-0963">Cytoplasm</keyword>
<keyword id="KW-0436">Ligase</keyword>
<keyword id="KW-0547">Nucleotide-binding</keyword>
<keyword id="KW-1185">Reference proteome</keyword>
<keyword id="KW-0819">tRNA processing</keyword>
<reference key="1">
    <citation type="journal article" date="2006" name="Proc. Natl. Acad. Sci. U.S.A.">
        <title>Genomic analysis of the uncultivated marine crenarchaeote Cenarchaeum symbiosum.</title>
        <authorList>
            <person name="Hallam S.J."/>
            <person name="Konstantinidis K.T."/>
            <person name="Putnam N."/>
            <person name="Schleper C."/>
            <person name="Watanabe Y."/>
            <person name="Sugahara J."/>
            <person name="Preston C."/>
            <person name="de la Torre J."/>
            <person name="Richardson P.M."/>
            <person name="DeLong E.F."/>
        </authorList>
    </citation>
    <scope>NUCLEOTIDE SEQUENCE [LARGE SCALE GENOMIC DNA]</scope>
    <source>
        <strain>A</strain>
    </source>
</reference>
<organism>
    <name type="scientific">Cenarchaeum symbiosum (strain A)</name>
    <dbReference type="NCBI Taxonomy" id="414004"/>
    <lineage>
        <taxon>Archaea</taxon>
        <taxon>Nitrososphaerota</taxon>
        <taxon>Candidatus Cenarchaeales</taxon>
        <taxon>Candidatus Cenarchaeaceae</taxon>
        <taxon>Candidatus Cenarchaeum</taxon>
    </lineage>
</organism>
<protein>
    <recommendedName>
        <fullName evidence="1">tRNA(Ile2) 2-agmatinylcytidine synthetase TiaS</fullName>
        <shortName evidence="1">tRNA(Ile2)-agm2C synthetase</shortName>
        <ecNumber evidence="1">6.3.4.22</ecNumber>
    </recommendedName>
    <alternativeName>
        <fullName evidence="1">tRNA(Ile2) agmatidine synthetase</fullName>
    </alternativeName>
</protein>
<gene>
    <name evidence="1" type="primary">tiaS</name>
    <name type="ordered locus">CENSYa_2023</name>
</gene>
<dbReference type="EC" id="6.3.4.22" evidence="1"/>
<dbReference type="EMBL" id="DP000238">
    <property type="protein sequence ID" value="ABK78627.1"/>
    <property type="status" value="ALT_INIT"/>
    <property type="molecule type" value="Genomic_DNA"/>
</dbReference>
<dbReference type="SMR" id="A0RZ60"/>
<dbReference type="STRING" id="414004.CENSYa_2023"/>
<dbReference type="EnsemblBacteria" id="ABK78627">
    <property type="protein sequence ID" value="ABK78627"/>
    <property type="gene ID" value="CENSYa_2023"/>
</dbReference>
<dbReference type="KEGG" id="csy:CENSYa_2023"/>
<dbReference type="PATRIC" id="fig|414004.10.peg.1855"/>
<dbReference type="HOGENOM" id="CLU_675459_0_0_2"/>
<dbReference type="Proteomes" id="UP000000758">
    <property type="component" value="Chromosome"/>
</dbReference>
<dbReference type="GO" id="GO:0005737">
    <property type="term" value="C:cytoplasm"/>
    <property type="evidence" value="ECO:0007669"/>
    <property type="project" value="UniProtKB-SubCell"/>
</dbReference>
<dbReference type="GO" id="GO:0005524">
    <property type="term" value="F:ATP binding"/>
    <property type="evidence" value="ECO:0007669"/>
    <property type="project" value="UniProtKB-KW"/>
</dbReference>
<dbReference type="GO" id="GO:0016879">
    <property type="term" value="F:ligase activity, forming carbon-nitrogen bonds"/>
    <property type="evidence" value="ECO:0007669"/>
    <property type="project" value="UniProtKB-UniRule"/>
</dbReference>
<dbReference type="GO" id="GO:0002101">
    <property type="term" value="P:tRNA wobble cytosine modification"/>
    <property type="evidence" value="ECO:0007669"/>
    <property type="project" value="UniProtKB-UniRule"/>
</dbReference>
<dbReference type="CDD" id="cd04482">
    <property type="entry name" value="RPA2_OBF_like"/>
    <property type="match status" value="1"/>
</dbReference>
<dbReference type="Gene3D" id="2.40.50.1010">
    <property type="match status" value="1"/>
</dbReference>
<dbReference type="Gene3D" id="3.30.70.2200">
    <property type="match status" value="1"/>
</dbReference>
<dbReference type="Gene3D" id="3.90.600.20">
    <property type="match status" value="1"/>
</dbReference>
<dbReference type="HAMAP" id="MF_01892">
    <property type="entry name" value="tRNA_Ile2_agm2C_synt"/>
    <property type="match status" value="1"/>
</dbReference>
<dbReference type="InterPro" id="IPR053870">
    <property type="entry name" value="TiaS-like_TCKD"/>
</dbReference>
<dbReference type="InterPro" id="IPR013696">
    <property type="entry name" value="TiaS_FLD"/>
</dbReference>
<dbReference type="InterPro" id="IPR024913">
    <property type="entry name" value="tRNA_Ile2__agm2C_synt"/>
</dbReference>
<dbReference type="InterPro" id="IPR055394">
    <property type="entry name" value="Zn_ribbon_TiaS"/>
</dbReference>
<dbReference type="PANTHER" id="PTHR40705">
    <property type="entry name" value="TRNA(ILE2) 2-AGMATINYLCYTIDINE SYNTHETASE TIAS"/>
    <property type="match status" value="1"/>
</dbReference>
<dbReference type="PANTHER" id="PTHR40705:SF1">
    <property type="entry name" value="TRNA(ILE2) 2-AGMATINYLCYTIDINE SYNTHETASE TIAS"/>
    <property type="match status" value="1"/>
</dbReference>
<dbReference type="Pfam" id="PF08489">
    <property type="entry name" value="TiaS_FLD"/>
    <property type="match status" value="1"/>
</dbReference>
<dbReference type="Pfam" id="PF22641">
    <property type="entry name" value="TiaS_TCKD"/>
    <property type="match status" value="1"/>
</dbReference>
<dbReference type="Pfam" id="PF23783">
    <property type="entry name" value="Zn_ribbon_TiaS"/>
    <property type="match status" value="1"/>
</dbReference>
<accession>A0RZ60</accession>
<evidence type="ECO:0000255" key="1">
    <source>
        <dbReference type="HAMAP-Rule" id="MF_01892"/>
    </source>
</evidence>
<evidence type="ECO:0000305" key="2"/>
<name>TIAS_CENSY</name>
<feature type="chain" id="PRO_0000407290" description="tRNA(Ile2) 2-agmatinylcytidine synthetase TiaS">
    <location>
        <begin position="1"/>
        <end position="446"/>
    </location>
</feature>
<proteinExistence type="inferred from homology"/>